<protein>
    <recommendedName>
        <fullName evidence="1">Bifunctional protein FolD</fullName>
    </recommendedName>
    <domain>
        <recommendedName>
            <fullName evidence="1">Methylenetetrahydrofolate dehydrogenase</fullName>
            <ecNumber evidence="1">1.5.1.5</ecNumber>
        </recommendedName>
    </domain>
    <domain>
        <recommendedName>
            <fullName evidence="1">Methenyltetrahydrofolate cyclohydrolase</fullName>
            <ecNumber evidence="1">3.5.4.9</ecNumber>
        </recommendedName>
    </domain>
</protein>
<organism>
    <name type="scientific">Chromohalobacter salexigens (strain ATCC BAA-138 / DSM 3043 / CIP 106854 / NCIMB 13768 / 1H11)</name>
    <dbReference type="NCBI Taxonomy" id="290398"/>
    <lineage>
        <taxon>Bacteria</taxon>
        <taxon>Pseudomonadati</taxon>
        <taxon>Pseudomonadota</taxon>
        <taxon>Gammaproteobacteria</taxon>
        <taxon>Oceanospirillales</taxon>
        <taxon>Halomonadaceae</taxon>
        <taxon>Chromohalobacter</taxon>
    </lineage>
</organism>
<feature type="chain" id="PRO_0000268314" description="Bifunctional protein FolD">
    <location>
        <begin position="1"/>
        <end position="287"/>
    </location>
</feature>
<feature type="binding site" evidence="1">
    <location>
        <begin position="166"/>
        <end position="168"/>
    </location>
    <ligand>
        <name>NADP(+)</name>
        <dbReference type="ChEBI" id="CHEBI:58349"/>
    </ligand>
</feature>
<feature type="binding site" evidence="1">
    <location>
        <position position="232"/>
    </location>
    <ligand>
        <name>NADP(+)</name>
        <dbReference type="ChEBI" id="CHEBI:58349"/>
    </ligand>
</feature>
<proteinExistence type="inferred from homology"/>
<sequence>MTAQLIDGKAIAANVREQVSRQVQARRQEGKRAPGLAVVLVGEDPASEVYVRNKHRACDKAGVHSVQHKLPADTTQADLEALIDSLNADCSIDGILVQLPLPDHLDARPILERIRPDKDVDGFHPYNLGRLAQRLPVLRPCTPKGIMTLLQESGIHARGLDAVIVGASNIVGRPMALELMLAGSTTTVCHRFTRDLESHVRRADLLVVAVGRPGLVKGEWVKEGAVVIDVGINRQDDGKLAGDVEFAPAAARASYITPVPGGVGPMTVASLLENTLFAAELHDGMHA</sequence>
<accession>Q1QVV9</accession>
<gene>
    <name evidence="1" type="primary">folD</name>
    <name type="ordered locus">Csal_2048</name>
</gene>
<comment type="function">
    <text evidence="1">Catalyzes the oxidation of 5,10-methylenetetrahydrofolate to 5,10-methenyltetrahydrofolate and then the hydrolysis of 5,10-methenyltetrahydrofolate to 10-formyltetrahydrofolate.</text>
</comment>
<comment type="catalytic activity">
    <reaction evidence="1">
        <text>(6R)-5,10-methylene-5,6,7,8-tetrahydrofolate + NADP(+) = (6R)-5,10-methenyltetrahydrofolate + NADPH</text>
        <dbReference type="Rhea" id="RHEA:22812"/>
        <dbReference type="ChEBI" id="CHEBI:15636"/>
        <dbReference type="ChEBI" id="CHEBI:57455"/>
        <dbReference type="ChEBI" id="CHEBI:57783"/>
        <dbReference type="ChEBI" id="CHEBI:58349"/>
        <dbReference type="EC" id="1.5.1.5"/>
    </reaction>
</comment>
<comment type="catalytic activity">
    <reaction evidence="1">
        <text>(6R)-5,10-methenyltetrahydrofolate + H2O = (6R)-10-formyltetrahydrofolate + H(+)</text>
        <dbReference type="Rhea" id="RHEA:23700"/>
        <dbReference type="ChEBI" id="CHEBI:15377"/>
        <dbReference type="ChEBI" id="CHEBI:15378"/>
        <dbReference type="ChEBI" id="CHEBI:57455"/>
        <dbReference type="ChEBI" id="CHEBI:195366"/>
        <dbReference type="EC" id="3.5.4.9"/>
    </reaction>
</comment>
<comment type="pathway">
    <text evidence="1">One-carbon metabolism; tetrahydrofolate interconversion.</text>
</comment>
<comment type="subunit">
    <text evidence="1">Homodimer.</text>
</comment>
<comment type="similarity">
    <text evidence="1">Belongs to the tetrahydrofolate dehydrogenase/cyclohydrolase family.</text>
</comment>
<dbReference type="EC" id="1.5.1.5" evidence="1"/>
<dbReference type="EC" id="3.5.4.9" evidence="1"/>
<dbReference type="EMBL" id="CP000285">
    <property type="protein sequence ID" value="ABE59399.1"/>
    <property type="molecule type" value="Genomic_DNA"/>
</dbReference>
<dbReference type="RefSeq" id="WP_011507345.1">
    <property type="nucleotide sequence ID" value="NC_007963.1"/>
</dbReference>
<dbReference type="SMR" id="Q1QVV9"/>
<dbReference type="STRING" id="290398.Csal_2048"/>
<dbReference type="GeneID" id="95334763"/>
<dbReference type="KEGG" id="csa:Csal_2048"/>
<dbReference type="eggNOG" id="COG0190">
    <property type="taxonomic scope" value="Bacteria"/>
</dbReference>
<dbReference type="HOGENOM" id="CLU_034045_2_1_6"/>
<dbReference type="OrthoDB" id="9803580at2"/>
<dbReference type="UniPathway" id="UPA00193"/>
<dbReference type="Proteomes" id="UP000000239">
    <property type="component" value="Chromosome"/>
</dbReference>
<dbReference type="GO" id="GO:0005829">
    <property type="term" value="C:cytosol"/>
    <property type="evidence" value="ECO:0007669"/>
    <property type="project" value="TreeGrafter"/>
</dbReference>
<dbReference type="GO" id="GO:0004477">
    <property type="term" value="F:methenyltetrahydrofolate cyclohydrolase activity"/>
    <property type="evidence" value="ECO:0007669"/>
    <property type="project" value="UniProtKB-UniRule"/>
</dbReference>
<dbReference type="GO" id="GO:0004488">
    <property type="term" value="F:methylenetetrahydrofolate dehydrogenase (NADP+) activity"/>
    <property type="evidence" value="ECO:0007669"/>
    <property type="project" value="UniProtKB-UniRule"/>
</dbReference>
<dbReference type="GO" id="GO:0000105">
    <property type="term" value="P:L-histidine biosynthetic process"/>
    <property type="evidence" value="ECO:0007669"/>
    <property type="project" value="UniProtKB-KW"/>
</dbReference>
<dbReference type="GO" id="GO:0009086">
    <property type="term" value="P:methionine biosynthetic process"/>
    <property type="evidence" value="ECO:0007669"/>
    <property type="project" value="UniProtKB-KW"/>
</dbReference>
<dbReference type="GO" id="GO:0006164">
    <property type="term" value="P:purine nucleotide biosynthetic process"/>
    <property type="evidence" value="ECO:0007669"/>
    <property type="project" value="UniProtKB-KW"/>
</dbReference>
<dbReference type="GO" id="GO:0035999">
    <property type="term" value="P:tetrahydrofolate interconversion"/>
    <property type="evidence" value="ECO:0007669"/>
    <property type="project" value="UniProtKB-UniRule"/>
</dbReference>
<dbReference type="CDD" id="cd01080">
    <property type="entry name" value="NAD_bind_m-THF_DH_Cyclohyd"/>
    <property type="match status" value="1"/>
</dbReference>
<dbReference type="FunFam" id="3.40.50.10860:FF:000001">
    <property type="entry name" value="Bifunctional protein FolD"/>
    <property type="match status" value="1"/>
</dbReference>
<dbReference type="FunFam" id="3.40.50.720:FF:000006">
    <property type="entry name" value="Bifunctional protein FolD"/>
    <property type="match status" value="1"/>
</dbReference>
<dbReference type="Gene3D" id="3.40.50.10860">
    <property type="entry name" value="Leucine Dehydrogenase, chain A, domain 1"/>
    <property type="match status" value="1"/>
</dbReference>
<dbReference type="Gene3D" id="3.40.50.720">
    <property type="entry name" value="NAD(P)-binding Rossmann-like Domain"/>
    <property type="match status" value="1"/>
</dbReference>
<dbReference type="HAMAP" id="MF_01576">
    <property type="entry name" value="THF_DHG_CYH"/>
    <property type="match status" value="1"/>
</dbReference>
<dbReference type="InterPro" id="IPR046346">
    <property type="entry name" value="Aminoacid_DH-like_N_sf"/>
</dbReference>
<dbReference type="InterPro" id="IPR036291">
    <property type="entry name" value="NAD(P)-bd_dom_sf"/>
</dbReference>
<dbReference type="InterPro" id="IPR000672">
    <property type="entry name" value="THF_DH/CycHdrlase"/>
</dbReference>
<dbReference type="InterPro" id="IPR020630">
    <property type="entry name" value="THF_DH/CycHdrlase_cat_dom"/>
</dbReference>
<dbReference type="InterPro" id="IPR020867">
    <property type="entry name" value="THF_DH/CycHdrlase_CS"/>
</dbReference>
<dbReference type="InterPro" id="IPR020631">
    <property type="entry name" value="THF_DH/CycHdrlase_NAD-bd_dom"/>
</dbReference>
<dbReference type="NCBIfam" id="NF008058">
    <property type="entry name" value="PRK10792.1"/>
    <property type="match status" value="1"/>
</dbReference>
<dbReference type="NCBIfam" id="NF010783">
    <property type="entry name" value="PRK14186.1"/>
    <property type="match status" value="1"/>
</dbReference>
<dbReference type="PANTHER" id="PTHR48099:SF5">
    <property type="entry name" value="C-1-TETRAHYDROFOLATE SYNTHASE, CYTOPLASMIC"/>
    <property type="match status" value="1"/>
</dbReference>
<dbReference type="PANTHER" id="PTHR48099">
    <property type="entry name" value="C-1-TETRAHYDROFOLATE SYNTHASE, CYTOPLASMIC-RELATED"/>
    <property type="match status" value="1"/>
</dbReference>
<dbReference type="Pfam" id="PF00763">
    <property type="entry name" value="THF_DHG_CYH"/>
    <property type="match status" value="1"/>
</dbReference>
<dbReference type="Pfam" id="PF02882">
    <property type="entry name" value="THF_DHG_CYH_C"/>
    <property type="match status" value="1"/>
</dbReference>
<dbReference type="PRINTS" id="PR00085">
    <property type="entry name" value="THFDHDRGNASE"/>
</dbReference>
<dbReference type="SUPFAM" id="SSF53223">
    <property type="entry name" value="Aminoacid dehydrogenase-like, N-terminal domain"/>
    <property type="match status" value="1"/>
</dbReference>
<dbReference type="SUPFAM" id="SSF51735">
    <property type="entry name" value="NAD(P)-binding Rossmann-fold domains"/>
    <property type="match status" value="1"/>
</dbReference>
<dbReference type="PROSITE" id="PS00767">
    <property type="entry name" value="THF_DHG_CYH_2"/>
    <property type="match status" value="1"/>
</dbReference>
<evidence type="ECO:0000255" key="1">
    <source>
        <dbReference type="HAMAP-Rule" id="MF_01576"/>
    </source>
</evidence>
<keyword id="KW-0028">Amino-acid biosynthesis</keyword>
<keyword id="KW-0368">Histidine biosynthesis</keyword>
<keyword id="KW-0378">Hydrolase</keyword>
<keyword id="KW-0486">Methionine biosynthesis</keyword>
<keyword id="KW-0511">Multifunctional enzyme</keyword>
<keyword id="KW-0521">NADP</keyword>
<keyword id="KW-0554">One-carbon metabolism</keyword>
<keyword id="KW-0560">Oxidoreductase</keyword>
<keyword id="KW-0658">Purine biosynthesis</keyword>
<keyword id="KW-1185">Reference proteome</keyword>
<reference key="1">
    <citation type="journal article" date="2011" name="Stand. Genomic Sci.">
        <title>Complete genome sequence of the halophilic and highly halotolerant Chromohalobacter salexigens type strain (1H11(T)).</title>
        <authorList>
            <person name="Copeland A."/>
            <person name="O'Connor K."/>
            <person name="Lucas S."/>
            <person name="Lapidus A."/>
            <person name="Berry K.W."/>
            <person name="Detter J.C."/>
            <person name="Del Rio T.G."/>
            <person name="Hammon N."/>
            <person name="Dalin E."/>
            <person name="Tice H."/>
            <person name="Pitluck S."/>
            <person name="Bruce D."/>
            <person name="Goodwin L."/>
            <person name="Han C."/>
            <person name="Tapia R."/>
            <person name="Saunders E."/>
            <person name="Schmutz J."/>
            <person name="Brettin T."/>
            <person name="Larimer F."/>
            <person name="Land M."/>
            <person name="Hauser L."/>
            <person name="Vargas C."/>
            <person name="Nieto J.J."/>
            <person name="Kyrpides N.C."/>
            <person name="Ivanova N."/>
            <person name="Goker M."/>
            <person name="Klenk H.P."/>
            <person name="Csonka L.N."/>
            <person name="Woyke T."/>
        </authorList>
    </citation>
    <scope>NUCLEOTIDE SEQUENCE [LARGE SCALE GENOMIC DNA]</scope>
    <source>
        <strain>ATCC BAA-138 / DSM 3043 / CIP 106854 / NCIMB 13768 / 1H11</strain>
    </source>
</reference>
<name>FOLD_CHRSD</name>